<dbReference type="EC" id="2.7.7.6" evidence="1"/>
<dbReference type="EMBL" id="CP000682">
    <property type="protein sequence ID" value="ABP94209.1"/>
    <property type="molecule type" value="Genomic_DNA"/>
</dbReference>
<dbReference type="RefSeq" id="WP_011921178.1">
    <property type="nucleotide sequence ID" value="NZ_CP139956.1"/>
</dbReference>
<dbReference type="SMR" id="A4YCQ7"/>
<dbReference type="STRING" id="399549.Msed_0032"/>
<dbReference type="KEGG" id="mse:Msed_0032"/>
<dbReference type="eggNOG" id="arCOG04258">
    <property type="taxonomic scope" value="Archaea"/>
</dbReference>
<dbReference type="HOGENOM" id="CLU_058320_4_0_2"/>
<dbReference type="Proteomes" id="UP000000242">
    <property type="component" value="Chromosome"/>
</dbReference>
<dbReference type="GO" id="GO:0005737">
    <property type="term" value="C:cytoplasm"/>
    <property type="evidence" value="ECO:0007669"/>
    <property type="project" value="UniProtKB-SubCell"/>
</dbReference>
<dbReference type="GO" id="GO:0000428">
    <property type="term" value="C:DNA-directed RNA polymerase complex"/>
    <property type="evidence" value="ECO:0007669"/>
    <property type="project" value="UniProtKB-KW"/>
</dbReference>
<dbReference type="GO" id="GO:0003677">
    <property type="term" value="F:DNA binding"/>
    <property type="evidence" value="ECO:0007669"/>
    <property type="project" value="InterPro"/>
</dbReference>
<dbReference type="GO" id="GO:0003899">
    <property type="term" value="F:DNA-directed RNA polymerase activity"/>
    <property type="evidence" value="ECO:0007669"/>
    <property type="project" value="UniProtKB-UniRule"/>
</dbReference>
<dbReference type="GO" id="GO:0006366">
    <property type="term" value="P:transcription by RNA polymerase II"/>
    <property type="evidence" value="ECO:0007669"/>
    <property type="project" value="TreeGrafter"/>
</dbReference>
<dbReference type="GO" id="GO:0006362">
    <property type="term" value="P:transcription elongation by RNA polymerase I"/>
    <property type="evidence" value="ECO:0007669"/>
    <property type="project" value="TreeGrafter"/>
</dbReference>
<dbReference type="GO" id="GO:0042797">
    <property type="term" value="P:tRNA transcription by RNA polymerase III"/>
    <property type="evidence" value="ECO:0007669"/>
    <property type="project" value="TreeGrafter"/>
</dbReference>
<dbReference type="Gene3D" id="3.90.940.20">
    <property type="entry name" value="RPB5-like RNA polymerase subunit"/>
    <property type="match status" value="1"/>
</dbReference>
<dbReference type="HAMAP" id="MF_00025">
    <property type="entry name" value="RNApol_Rpo5_RPB5"/>
    <property type="match status" value="1"/>
</dbReference>
<dbReference type="InterPro" id="IPR014381">
    <property type="entry name" value="Arch_Rpo5/euc_Rpb5"/>
</dbReference>
<dbReference type="InterPro" id="IPR000783">
    <property type="entry name" value="RNA_pol_subH/Rpb5_C"/>
</dbReference>
<dbReference type="InterPro" id="IPR020608">
    <property type="entry name" value="RNA_pol_subH/Rpb5_CS"/>
</dbReference>
<dbReference type="InterPro" id="IPR035913">
    <property type="entry name" value="RPB5-like_sf"/>
</dbReference>
<dbReference type="NCBIfam" id="NF007129">
    <property type="entry name" value="PRK09570.1"/>
    <property type="match status" value="1"/>
</dbReference>
<dbReference type="PANTHER" id="PTHR10535">
    <property type="entry name" value="DNA-DIRECTED RNA POLYMERASES I, II, AND III SUBUNIT RPABC1"/>
    <property type="match status" value="1"/>
</dbReference>
<dbReference type="PANTHER" id="PTHR10535:SF0">
    <property type="entry name" value="DNA-DIRECTED RNA POLYMERASES I, II, AND III SUBUNIT RPABC1"/>
    <property type="match status" value="1"/>
</dbReference>
<dbReference type="Pfam" id="PF01191">
    <property type="entry name" value="RNA_pol_Rpb5_C"/>
    <property type="match status" value="1"/>
</dbReference>
<dbReference type="SUPFAM" id="SSF55287">
    <property type="entry name" value="RPB5-like RNA polymerase subunit"/>
    <property type="match status" value="1"/>
</dbReference>
<dbReference type="PROSITE" id="PS01110">
    <property type="entry name" value="RNA_POL_H_23KD"/>
    <property type="match status" value="1"/>
</dbReference>
<name>RPO5_METS5</name>
<organism>
    <name type="scientific">Metallosphaera sedula (strain ATCC 51363 / DSM 5348 / JCM 9185 / NBRC 15509 / TH2)</name>
    <dbReference type="NCBI Taxonomy" id="399549"/>
    <lineage>
        <taxon>Archaea</taxon>
        <taxon>Thermoproteota</taxon>
        <taxon>Thermoprotei</taxon>
        <taxon>Sulfolobales</taxon>
        <taxon>Sulfolobaceae</taxon>
        <taxon>Metallosphaera</taxon>
    </lineage>
</organism>
<gene>
    <name evidence="1" type="primary">rpo5</name>
    <name evidence="1" type="synonym">rpoH</name>
    <name type="ordered locus">Msed_0032</name>
</gene>
<feature type="chain" id="PRO_1000071009" description="DNA-directed RNA polymerase subunit Rpo5">
    <location>
        <begin position="1"/>
        <end position="83"/>
    </location>
</feature>
<keyword id="KW-0963">Cytoplasm</keyword>
<keyword id="KW-0240">DNA-directed RNA polymerase</keyword>
<keyword id="KW-0548">Nucleotidyltransferase</keyword>
<keyword id="KW-1185">Reference proteome</keyword>
<keyword id="KW-0804">Transcription</keyword>
<keyword id="KW-0808">Transferase</keyword>
<accession>A4YCQ7</accession>
<comment type="function">
    <text evidence="1">DNA-dependent RNA polymerase (RNAP) catalyzes the transcription of DNA into RNA using the four ribonucleoside triphosphates as substrates.</text>
</comment>
<comment type="catalytic activity">
    <reaction evidence="1">
        <text>RNA(n) + a ribonucleoside 5'-triphosphate = RNA(n+1) + diphosphate</text>
        <dbReference type="Rhea" id="RHEA:21248"/>
        <dbReference type="Rhea" id="RHEA-COMP:14527"/>
        <dbReference type="Rhea" id="RHEA-COMP:17342"/>
        <dbReference type="ChEBI" id="CHEBI:33019"/>
        <dbReference type="ChEBI" id="CHEBI:61557"/>
        <dbReference type="ChEBI" id="CHEBI:140395"/>
        <dbReference type="EC" id="2.7.7.6"/>
    </reaction>
</comment>
<comment type="subunit">
    <text evidence="1">Part of the RNA polymerase complex.</text>
</comment>
<comment type="subcellular location">
    <subcellularLocation>
        <location evidence="1">Cytoplasm</location>
    </subcellularLocation>
</comment>
<comment type="similarity">
    <text evidence="1">Belongs to the archaeal Rpo5/eukaryotic RPB5 RNA polymerase subunit family.</text>
</comment>
<evidence type="ECO:0000255" key="1">
    <source>
        <dbReference type="HAMAP-Rule" id="MF_00025"/>
    </source>
</evidence>
<protein>
    <recommendedName>
        <fullName evidence="1">DNA-directed RNA polymerase subunit Rpo5</fullName>
        <ecNumber evidence="1">2.7.7.6</ecNumber>
    </recommendedName>
    <alternativeName>
        <fullName evidence="1">DNA-directed RNA polymerase subunit H</fullName>
    </alternativeName>
</protein>
<reference key="1">
    <citation type="journal article" date="2008" name="Appl. Environ. Microbiol.">
        <title>The genome sequence of the metal-mobilizing, extremely thermoacidophilic archaeon Metallosphaera sedula provides insights into bioleaching-associated metabolism.</title>
        <authorList>
            <person name="Auernik K.S."/>
            <person name="Maezato Y."/>
            <person name="Blum P.H."/>
            <person name="Kelly R.M."/>
        </authorList>
    </citation>
    <scope>NUCLEOTIDE SEQUENCE [LARGE SCALE GENOMIC DNA]</scope>
    <source>
        <strain>ATCC 51363 / DSM 5348 / JCM 9185 / NBRC 15509 / TH2</strain>
    </source>
</reference>
<proteinExistence type="inferred from homology"/>
<sequence>MRSSSKKIDPSVHVLVPKHEVLSVEEAFKVLKELGIGPEQLPWMRASDPMARTINAKPGDIVKITRKSPIVGELVVYRYVVSG</sequence>